<name>A6_DROME</name>
<dbReference type="EMBL" id="Y16065">
    <property type="protein sequence ID" value="CAA76017.1"/>
    <property type="molecule type" value="Genomic_DNA"/>
</dbReference>
<dbReference type="EMBL" id="Y16066">
    <property type="protein sequence ID" value="CAA76018.1"/>
    <property type="molecule type" value="mRNA"/>
</dbReference>
<dbReference type="EMBL" id="AE014298">
    <property type="protein sequence ID" value="AAF45661.2"/>
    <property type="molecule type" value="Genomic_DNA"/>
</dbReference>
<dbReference type="EMBL" id="AL031025">
    <property type="protein sequence ID" value="CAA19836.1"/>
    <property type="molecule type" value="Genomic_DNA"/>
</dbReference>
<dbReference type="EMBL" id="AY069426">
    <property type="protein sequence ID" value="AAL39571.1"/>
    <property type="molecule type" value="mRNA"/>
</dbReference>
<dbReference type="RefSeq" id="NP_001259141.1">
    <property type="nucleotide sequence ID" value="NM_001272212.1"/>
</dbReference>
<dbReference type="RefSeq" id="NP_001259142.1">
    <property type="nucleotide sequence ID" value="NM_001272213.1"/>
</dbReference>
<dbReference type="RefSeq" id="NP_477309.1">
    <property type="nucleotide sequence ID" value="NM_057961.5"/>
</dbReference>
<dbReference type="SMR" id="O46341"/>
<dbReference type="BioGRID" id="57676">
    <property type="interactions" value="8"/>
</dbReference>
<dbReference type="DIP" id="DIP-19729N"/>
<dbReference type="FunCoup" id="O46341">
    <property type="interactions" value="127"/>
</dbReference>
<dbReference type="IntAct" id="O46341">
    <property type="interactions" value="3"/>
</dbReference>
<dbReference type="STRING" id="7227.FBpp0303433"/>
<dbReference type="iPTMnet" id="O46341"/>
<dbReference type="PaxDb" id="7227-FBpp0070269"/>
<dbReference type="DNASU" id="31127"/>
<dbReference type="EnsemblMetazoa" id="FBtr0070279">
    <property type="protein sequence ID" value="FBpp0070269"/>
    <property type="gene ID" value="FBgn0023130"/>
</dbReference>
<dbReference type="EnsemblMetazoa" id="FBtr0330407">
    <property type="protein sequence ID" value="FBpp0303433"/>
    <property type="gene ID" value="FBgn0023130"/>
</dbReference>
<dbReference type="EnsemblMetazoa" id="FBtr0333116">
    <property type="protein sequence ID" value="FBpp0305327"/>
    <property type="gene ID" value="FBgn0023130"/>
</dbReference>
<dbReference type="GeneID" id="31127"/>
<dbReference type="KEGG" id="dme:Dmel_CG3771"/>
<dbReference type="UCSC" id="CG3771-RA">
    <property type="organism name" value="d. melanogaster"/>
</dbReference>
<dbReference type="AGR" id="FB:FBgn0023130"/>
<dbReference type="CTD" id="31127"/>
<dbReference type="FlyBase" id="FBgn0023130">
    <property type="gene designation" value="a6"/>
</dbReference>
<dbReference type="VEuPathDB" id="VectorBase:FBgn0023130"/>
<dbReference type="eggNOG" id="ENOG502TCW8">
    <property type="taxonomic scope" value="Eukaryota"/>
</dbReference>
<dbReference type="HOGENOM" id="CLU_657691_0_0_1"/>
<dbReference type="InParanoid" id="O46341"/>
<dbReference type="OMA" id="MNQRHSE"/>
<dbReference type="OrthoDB" id="7867878at2759"/>
<dbReference type="PhylomeDB" id="O46341"/>
<dbReference type="BioGRID-ORCS" id="31127">
    <property type="hits" value="0 hits in 1 CRISPR screen"/>
</dbReference>
<dbReference type="GenomeRNAi" id="31127"/>
<dbReference type="PRO" id="PR:O46341"/>
<dbReference type="Proteomes" id="UP000000803">
    <property type="component" value="Chromosome X"/>
</dbReference>
<dbReference type="Bgee" id="FBgn0023130">
    <property type="expression patterns" value="Expressed in indirect flight muscle cell (Drosophila) in body wall and 65 other cell types or tissues"/>
</dbReference>
<dbReference type="ExpressionAtlas" id="O46341">
    <property type="expression patterns" value="baseline and differential"/>
</dbReference>
<dbReference type="GO" id="GO:0001700">
    <property type="term" value="P:embryonic development via the syncytial blastoderm"/>
    <property type="evidence" value="ECO:0000270"/>
    <property type="project" value="UniProtKB"/>
</dbReference>
<reference key="1">
    <citation type="journal article" date="1999" name="Genetika">
        <title>Comparison of the molecular and genetic map of the 2B6-2B7-8 of Drosophila melanogaster X-chromosome.</title>
        <authorList>
            <person name="Makunin I.V."/>
            <person name="Shestopal S.A."/>
            <person name="Beliaeva E.S."/>
            <person name="Ashburner M."/>
            <person name="Khimulev I.F."/>
        </authorList>
    </citation>
    <scope>NUCLEOTIDE SEQUENCE [GENOMIC DNA / MRNA]</scope>
    <source>
        <strain>Oregon-RC</strain>
        <tissue>Larva</tissue>
    </source>
</reference>
<reference key="2">
    <citation type="journal article" date="2000" name="Science">
        <title>The genome sequence of Drosophila melanogaster.</title>
        <authorList>
            <person name="Adams M.D."/>
            <person name="Celniker S.E."/>
            <person name="Holt R.A."/>
            <person name="Evans C.A."/>
            <person name="Gocayne J.D."/>
            <person name="Amanatides P.G."/>
            <person name="Scherer S.E."/>
            <person name="Li P.W."/>
            <person name="Hoskins R.A."/>
            <person name="Galle R.F."/>
            <person name="George R.A."/>
            <person name="Lewis S.E."/>
            <person name="Richards S."/>
            <person name="Ashburner M."/>
            <person name="Henderson S.N."/>
            <person name="Sutton G.G."/>
            <person name="Wortman J.R."/>
            <person name="Yandell M.D."/>
            <person name="Zhang Q."/>
            <person name="Chen L.X."/>
            <person name="Brandon R.C."/>
            <person name="Rogers Y.-H.C."/>
            <person name="Blazej R.G."/>
            <person name="Champe M."/>
            <person name="Pfeiffer B.D."/>
            <person name="Wan K.H."/>
            <person name="Doyle C."/>
            <person name="Baxter E.G."/>
            <person name="Helt G."/>
            <person name="Nelson C.R."/>
            <person name="Miklos G.L.G."/>
            <person name="Abril J.F."/>
            <person name="Agbayani A."/>
            <person name="An H.-J."/>
            <person name="Andrews-Pfannkoch C."/>
            <person name="Baldwin D."/>
            <person name="Ballew R.M."/>
            <person name="Basu A."/>
            <person name="Baxendale J."/>
            <person name="Bayraktaroglu L."/>
            <person name="Beasley E.M."/>
            <person name="Beeson K.Y."/>
            <person name="Benos P.V."/>
            <person name="Berman B.P."/>
            <person name="Bhandari D."/>
            <person name="Bolshakov S."/>
            <person name="Borkova D."/>
            <person name="Botchan M.R."/>
            <person name="Bouck J."/>
            <person name="Brokstein P."/>
            <person name="Brottier P."/>
            <person name="Burtis K.C."/>
            <person name="Busam D.A."/>
            <person name="Butler H."/>
            <person name="Cadieu E."/>
            <person name="Center A."/>
            <person name="Chandra I."/>
            <person name="Cherry J.M."/>
            <person name="Cawley S."/>
            <person name="Dahlke C."/>
            <person name="Davenport L.B."/>
            <person name="Davies P."/>
            <person name="de Pablos B."/>
            <person name="Delcher A."/>
            <person name="Deng Z."/>
            <person name="Mays A.D."/>
            <person name="Dew I."/>
            <person name="Dietz S.M."/>
            <person name="Dodson K."/>
            <person name="Doup L.E."/>
            <person name="Downes M."/>
            <person name="Dugan-Rocha S."/>
            <person name="Dunkov B.C."/>
            <person name="Dunn P."/>
            <person name="Durbin K.J."/>
            <person name="Evangelista C.C."/>
            <person name="Ferraz C."/>
            <person name="Ferriera S."/>
            <person name="Fleischmann W."/>
            <person name="Fosler C."/>
            <person name="Gabrielian A.E."/>
            <person name="Garg N.S."/>
            <person name="Gelbart W.M."/>
            <person name="Glasser K."/>
            <person name="Glodek A."/>
            <person name="Gong F."/>
            <person name="Gorrell J.H."/>
            <person name="Gu Z."/>
            <person name="Guan P."/>
            <person name="Harris M."/>
            <person name="Harris N.L."/>
            <person name="Harvey D.A."/>
            <person name="Heiman T.J."/>
            <person name="Hernandez J.R."/>
            <person name="Houck J."/>
            <person name="Hostin D."/>
            <person name="Houston K.A."/>
            <person name="Howland T.J."/>
            <person name="Wei M.-H."/>
            <person name="Ibegwam C."/>
            <person name="Jalali M."/>
            <person name="Kalush F."/>
            <person name="Karpen G.H."/>
            <person name="Ke Z."/>
            <person name="Kennison J.A."/>
            <person name="Ketchum K.A."/>
            <person name="Kimmel B.E."/>
            <person name="Kodira C.D."/>
            <person name="Kraft C.L."/>
            <person name="Kravitz S."/>
            <person name="Kulp D."/>
            <person name="Lai Z."/>
            <person name="Lasko P."/>
            <person name="Lei Y."/>
            <person name="Levitsky A.A."/>
            <person name="Li J.H."/>
            <person name="Li Z."/>
            <person name="Liang Y."/>
            <person name="Lin X."/>
            <person name="Liu X."/>
            <person name="Mattei B."/>
            <person name="McIntosh T.C."/>
            <person name="McLeod M.P."/>
            <person name="McPherson D."/>
            <person name="Merkulov G."/>
            <person name="Milshina N.V."/>
            <person name="Mobarry C."/>
            <person name="Morris J."/>
            <person name="Moshrefi A."/>
            <person name="Mount S.M."/>
            <person name="Moy M."/>
            <person name="Murphy B."/>
            <person name="Murphy L."/>
            <person name="Muzny D.M."/>
            <person name="Nelson D.L."/>
            <person name="Nelson D.R."/>
            <person name="Nelson K.A."/>
            <person name="Nixon K."/>
            <person name="Nusskern D.R."/>
            <person name="Pacleb J.M."/>
            <person name="Palazzolo M."/>
            <person name="Pittman G.S."/>
            <person name="Pan S."/>
            <person name="Pollard J."/>
            <person name="Puri V."/>
            <person name="Reese M.G."/>
            <person name="Reinert K."/>
            <person name="Remington K."/>
            <person name="Saunders R.D.C."/>
            <person name="Scheeler F."/>
            <person name="Shen H."/>
            <person name="Shue B.C."/>
            <person name="Siden-Kiamos I."/>
            <person name="Simpson M."/>
            <person name="Skupski M.P."/>
            <person name="Smith T.J."/>
            <person name="Spier E."/>
            <person name="Spradling A.C."/>
            <person name="Stapleton M."/>
            <person name="Strong R."/>
            <person name="Sun E."/>
            <person name="Svirskas R."/>
            <person name="Tector C."/>
            <person name="Turner R."/>
            <person name="Venter E."/>
            <person name="Wang A.H."/>
            <person name="Wang X."/>
            <person name="Wang Z.-Y."/>
            <person name="Wassarman D.A."/>
            <person name="Weinstock G.M."/>
            <person name="Weissenbach J."/>
            <person name="Williams S.M."/>
            <person name="Woodage T."/>
            <person name="Worley K.C."/>
            <person name="Wu D."/>
            <person name="Yang S."/>
            <person name="Yao Q.A."/>
            <person name="Ye J."/>
            <person name="Yeh R.-F."/>
            <person name="Zaveri J.S."/>
            <person name="Zhan M."/>
            <person name="Zhang G."/>
            <person name="Zhao Q."/>
            <person name="Zheng L."/>
            <person name="Zheng X.H."/>
            <person name="Zhong F.N."/>
            <person name="Zhong W."/>
            <person name="Zhou X."/>
            <person name="Zhu S.C."/>
            <person name="Zhu X."/>
            <person name="Smith H.O."/>
            <person name="Gibbs R.A."/>
            <person name="Myers E.W."/>
            <person name="Rubin G.M."/>
            <person name="Venter J.C."/>
        </authorList>
    </citation>
    <scope>NUCLEOTIDE SEQUENCE [LARGE SCALE GENOMIC DNA]</scope>
    <source>
        <strain>Berkeley</strain>
    </source>
</reference>
<reference key="3">
    <citation type="journal article" date="2002" name="Genome Biol.">
        <title>Annotation of the Drosophila melanogaster euchromatic genome: a systematic review.</title>
        <authorList>
            <person name="Misra S."/>
            <person name="Crosby M.A."/>
            <person name="Mungall C.J."/>
            <person name="Matthews B.B."/>
            <person name="Campbell K.S."/>
            <person name="Hradecky P."/>
            <person name="Huang Y."/>
            <person name="Kaminker J.S."/>
            <person name="Millburn G.H."/>
            <person name="Prochnik S.E."/>
            <person name="Smith C.D."/>
            <person name="Tupy J.L."/>
            <person name="Whitfield E.J."/>
            <person name="Bayraktaroglu L."/>
            <person name="Berman B.P."/>
            <person name="Bettencourt B.R."/>
            <person name="Celniker S.E."/>
            <person name="de Grey A.D.N.J."/>
            <person name="Drysdale R.A."/>
            <person name="Harris N.L."/>
            <person name="Richter J."/>
            <person name="Russo S."/>
            <person name="Schroeder A.J."/>
            <person name="Shu S.Q."/>
            <person name="Stapleton M."/>
            <person name="Yamada C."/>
            <person name="Ashburner M."/>
            <person name="Gelbart W.M."/>
            <person name="Rubin G.M."/>
            <person name="Lewis S.E."/>
        </authorList>
    </citation>
    <scope>GENOME REANNOTATION</scope>
    <source>
        <strain>Berkeley</strain>
    </source>
</reference>
<reference key="4">
    <citation type="journal article" date="2000" name="Science">
        <title>From sequence to chromosome: the tip of the X chromosome of D. melanogaster.</title>
        <authorList>
            <person name="Benos P.V."/>
            <person name="Gatt M.K."/>
            <person name="Ashburner M."/>
            <person name="Murphy L."/>
            <person name="Harris D."/>
            <person name="Barrell B.G."/>
            <person name="Ferraz C."/>
            <person name="Vidal S."/>
            <person name="Brun C."/>
            <person name="Demailles J."/>
            <person name="Cadieu E."/>
            <person name="Dreano S."/>
            <person name="Gloux S."/>
            <person name="Lelaure V."/>
            <person name="Mottier S."/>
            <person name="Galibert F."/>
            <person name="Borkova D."/>
            <person name="Minana B."/>
            <person name="Kafatos F.C."/>
            <person name="Louis C."/>
            <person name="Siden-Kiamos I."/>
            <person name="Bolshakov S."/>
            <person name="Papagiannakis G."/>
            <person name="Spanos L."/>
            <person name="Cox S."/>
            <person name="Madueno E."/>
            <person name="de Pablos B."/>
            <person name="Modolell J."/>
            <person name="Peter A."/>
            <person name="Schoettler P."/>
            <person name="Werner M."/>
            <person name="Mourkioti F."/>
            <person name="Beinert N."/>
            <person name="Dowe G."/>
            <person name="Schaefer U."/>
            <person name="Jaeckle H."/>
            <person name="Bucheton A."/>
            <person name="Callister D.M."/>
            <person name="Campbell L.A."/>
            <person name="Darlamitsou A."/>
            <person name="Henderson N.S."/>
            <person name="McMillan P.J."/>
            <person name="Salles C."/>
            <person name="Tait E.A."/>
            <person name="Valenti P."/>
            <person name="Saunders R.D.C."/>
            <person name="Glover D.M."/>
        </authorList>
    </citation>
    <scope>NUCLEOTIDE SEQUENCE [LARGE SCALE GENOMIC DNA]</scope>
    <source>
        <strain>Oregon-R</strain>
    </source>
</reference>
<reference key="5">
    <citation type="journal article" date="2002" name="Genome Biol.">
        <title>A Drosophila full-length cDNA resource.</title>
        <authorList>
            <person name="Stapleton M."/>
            <person name="Carlson J.W."/>
            <person name="Brokstein P."/>
            <person name="Yu C."/>
            <person name="Champe M."/>
            <person name="George R.A."/>
            <person name="Guarin H."/>
            <person name="Kronmiller B."/>
            <person name="Pacleb J.M."/>
            <person name="Park S."/>
            <person name="Wan K.H."/>
            <person name="Rubin G.M."/>
            <person name="Celniker S.E."/>
        </authorList>
    </citation>
    <scope>NUCLEOTIDE SEQUENCE [LARGE SCALE MRNA]</scope>
    <source>
        <strain>Berkeley</strain>
        <tissue>Embryo</tissue>
    </source>
</reference>
<reference key="6">
    <citation type="journal article" date="2008" name="J. Proteome Res.">
        <title>Phosphoproteome analysis of Drosophila melanogaster embryos.</title>
        <authorList>
            <person name="Zhai B."/>
            <person name="Villen J."/>
            <person name="Beausoleil S.A."/>
            <person name="Mintseris J."/>
            <person name="Gygi S.P."/>
        </authorList>
    </citation>
    <scope>PHOSPHORYLATION [LARGE SCALE ANALYSIS] AT SER-86; THR-133 AND SER-134</scope>
    <scope>IDENTIFICATION BY MASS SPECTROMETRY</scope>
    <source>
        <tissue>Embryo</tissue>
    </source>
</reference>
<accession>O46341</accession>
<accession>Q9W564</accession>
<proteinExistence type="evidence at protein level"/>
<feature type="chain" id="PRO_0000064407" description="Protein a6">
    <location>
        <begin position="1"/>
        <end position="409"/>
    </location>
</feature>
<feature type="region of interest" description="Disordered" evidence="1">
    <location>
        <begin position="106"/>
        <end position="165"/>
    </location>
</feature>
<feature type="compositionally biased region" description="Basic residues" evidence="1">
    <location>
        <begin position="106"/>
        <end position="120"/>
    </location>
</feature>
<feature type="compositionally biased region" description="Polar residues" evidence="1">
    <location>
        <begin position="142"/>
        <end position="155"/>
    </location>
</feature>
<feature type="modified residue" description="Phosphoserine" evidence="2">
    <location>
        <position position="86"/>
    </location>
</feature>
<feature type="modified residue" description="Phosphothreonine" evidence="2">
    <location>
        <position position="133"/>
    </location>
</feature>
<feature type="modified residue" description="Phosphoserine" evidence="2">
    <location>
        <position position="134"/>
    </location>
</feature>
<keyword id="KW-0597">Phosphoprotein</keyword>
<keyword id="KW-1185">Reference proteome</keyword>
<gene>
    <name type="primary">a6</name>
    <name type="ORF">CG3771</name>
</gene>
<protein>
    <recommendedName>
        <fullName>Protein a6</fullName>
    </recommendedName>
</protein>
<comment type="developmental stage">
    <text>Expressed throughout embryogenesis.</text>
</comment>
<evidence type="ECO:0000256" key="1">
    <source>
        <dbReference type="SAM" id="MobiDB-lite"/>
    </source>
</evidence>
<evidence type="ECO:0000269" key="2">
    <source>
    </source>
</evidence>
<organism>
    <name type="scientific">Drosophila melanogaster</name>
    <name type="common">Fruit fly</name>
    <dbReference type="NCBI Taxonomy" id="7227"/>
    <lineage>
        <taxon>Eukaryota</taxon>
        <taxon>Metazoa</taxon>
        <taxon>Ecdysozoa</taxon>
        <taxon>Arthropoda</taxon>
        <taxon>Hexapoda</taxon>
        <taxon>Insecta</taxon>
        <taxon>Pterygota</taxon>
        <taxon>Neoptera</taxon>
        <taxon>Endopterygota</taxon>
        <taxon>Diptera</taxon>
        <taxon>Brachycera</taxon>
        <taxon>Muscomorpha</taxon>
        <taxon>Ephydroidea</taxon>
        <taxon>Drosophilidae</taxon>
        <taxon>Drosophila</taxon>
        <taxon>Sophophora</taxon>
    </lineage>
</organism>
<sequence length="409" mass="44077">MNQKHSEPFYISPRLFDNRRLKRRRCRWMERLLEHQRICMARMRDQVALASKTDRQLSHLQRRHVASTLQPDVTIDLLSDDDETPSAGQPAAAGHNRLLIPAPGHRAHRTGRRQAPRRAATHSYPVTDSILITSDDEHNEQEPSSTARVRSQLSMRSPPPLAPLTQSETIEEVTVSLVPRTSTTANCLTRVSGHPKPCRASTAASNGFATAEGGEGGNETGCFLEVDVGGGITATLPDETTVHTVIANRIYELSLSKLREGLAFSGVPEYTNDLMPEQLQKLSPALRAKVAPLVAPSPPTPISLKLSSDLSISLISDEDDCESTGPHVNGGVGTEPVHPVVVAAAEAHAAAKLLKQQQPQLSVVQHLQYVGGGLAAPVALALPVMAANPTSSASVVALPLQLPRRRKLG</sequence>